<feature type="chain" id="PRO_1000083857" description="Protein-export protein SecB">
    <location>
        <begin position="1"/>
        <end position="155"/>
    </location>
</feature>
<accession>B1IZI1</accession>
<name>SECB_ECOLC</name>
<dbReference type="EMBL" id="CP000946">
    <property type="protein sequence ID" value="ACA75785.1"/>
    <property type="molecule type" value="Genomic_DNA"/>
</dbReference>
<dbReference type="RefSeq" id="WP_000003382.1">
    <property type="nucleotide sequence ID" value="NZ_MTFT01000034.1"/>
</dbReference>
<dbReference type="SMR" id="B1IZI1"/>
<dbReference type="GeneID" id="89518465"/>
<dbReference type="KEGG" id="ecl:EcolC_0099"/>
<dbReference type="HOGENOM" id="CLU_111574_1_0_6"/>
<dbReference type="GO" id="GO:0005737">
    <property type="term" value="C:cytoplasm"/>
    <property type="evidence" value="ECO:0007669"/>
    <property type="project" value="UniProtKB-SubCell"/>
</dbReference>
<dbReference type="GO" id="GO:0051082">
    <property type="term" value="F:unfolded protein binding"/>
    <property type="evidence" value="ECO:0007669"/>
    <property type="project" value="InterPro"/>
</dbReference>
<dbReference type="GO" id="GO:0006457">
    <property type="term" value="P:protein folding"/>
    <property type="evidence" value="ECO:0007669"/>
    <property type="project" value="UniProtKB-UniRule"/>
</dbReference>
<dbReference type="GO" id="GO:0051262">
    <property type="term" value="P:protein tetramerization"/>
    <property type="evidence" value="ECO:0007669"/>
    <property type="project" value="InterPro"/>
</dbReference>
<dbReference type="GO" id="GO:0015031">
    <property type="term" value="P:protein transport"/>
    <property type="evidence" value="ECO:0007669"/>
    <property type="project" value="UniProtKB-UniRule"/>
</dbReference>
<dbReference type="CDD" id="cd00557">
    <property type="entry name" value="Translocase_SecB"/>
    <property type="match status" value="1"/>
</dbReference>
<dbReference type="FunFam" id="3.10.420.10:FF:000001">
    <property type="entry name" value="Protein-export chaperone SecB"/>
    <property type="match status" value="1"/>
</dbReference>
<dbReference type="Gene3D" id="3.10.420.10">
    <property type="entry name" value="SecB-like"/>
    <property type="match status" value="1"/>
</dbReference>
<dbReference type="HAMAP" id="MF_00821">
    <property type="entry name" value="SecB"/>
    <property type="match status" value="1"/>
</dbReference>
<dbReference type="InterPro" id="IPR003708">
    <property type="entry name" value="SecB"/>
</dbReference>
<dbReference type="InterPro" id="IPR035958">
    <property type="entry name" value="SecB-like_sf"/>
</dbReference>
<dbReference type="NCBIfam" id="NF004390">
    <property type="entry name" value="PRK05751.1-1"/>
    <property type="match status" value="1"/>
</dbReference>
<dbReference type="NCBIfam" id="NF004393">
    <property type="entry name" value="PRK05751.1-4"/>
    <property type="match status" value="1"/>
</dbReference>
<dbReference type="NCBIfam" id="TIGR00809">
    <property type="entry name" value="secB"/>
    <property type="match status" value="1"/>
</dbReference>
<dbReference type="PANTHER" id="PTHR36918">
    <property type="match status" value="1"/>
</dbReference>
<dbReference type="PANTHER" id="PTHR36918:SF1">
    <property type="entry name" value="PROTEIN-EXPORT PROTEIN SECB"/>
    <property type="match status" value="1"/>
</dbReference>
<dbReference type="Pfam" id="PF02556">
    <property type="entry name" value="SecB"/>
    <property type="match status" value="1"/>
</dbReference>
<dbReference type="PRINTS" id="PR01594">
    <property type="entry name" value="SECBCHAPRONE"/>
</dbReference>
<dbReference type="SUPFAM" id="SSF54611">
    <property type="entry name" value="SecB-like"/>
    <property type="match status" value="1"/>
</dbReference>
<comment type="function">
    <text evidence="1">One of the proteins required for the normal export of preproteins out of the cell cytoplasm. It is a molecular chaperone that binds to a subset of precursor proteins, maintaining them in a translocation-competent state. It also specifically binds to its receptor SecA.</text>
</comment>
<comment type="subunit">
    <text evidence="1">Homotetramer, a dimer of dimers. One homotetramer interacts with 1 SecA dimer.</text>
</comment>
<comment type="subcellular location">
    <subcellularLocation>
        <location evidence="1">Cytoplasm</location>
    </subcellularLocation>
</comment>
<comment type="similarity">
    <text evidence="1">Belongs to the SecB family.</text>
</comment>
<organism>
    <name type="scientific">Escherichia coli (strain ATCC 8739 / DSM 1576 / NBRC 3972 / NCIMB 8545 / WDCM 00012 / Crooks)</name>
    <dbReference type="NCBI Taxonomy" id="481805"/>
    <lineage>
        <taxon>Bacteria</taxon>
        <taxon>Pseudomonadati</taxon>
        <taxon>Pseudomonadota</taxon>
        <taxon>Gammaproteobacteria</taxon>
        <taxon>Enterobacterales</taxon>
        <taxon>Enterobacteriaceae</taxon>
        <taxon>Escherichia</taxon>
    </lineage>
</organism>
<protein>
    <recommendedName>
        <fullName evidence="1">Protein-export protein SecB</fullName>
    </recommendedName>
</protein>
<keyword id="KW-0143">Chaperone</keyword>
<keyword id="KW-0963">Cytoplasm</keyword>
<keyword id="KW-0653">Protein transport</keyword>
<keyword id="KW-0811">Translocation</keyword>
<keyword id="KW-0813">Transport</keyword>
<reference key="1">
    <citation type="submission" date="2008-02" db="EMBL/GenBank/DDBJ databases">
        <title>Complete sequence of Escherichia coli C str. ATCC 8739.</title>
        <authorList>
            <person name="Copeland A."/>
            <person name="Lucas S."/>
            <person name="Lapidus A."/>
            <person name="Glavina del Rio T."/>
            <person name="Dalin E."/>
            <person name="Tice H."/>
            <person name="Bruce D."/>
            <person name="Goodwin L."/>
            <person name="Pitluck S."/>
            <person name="Kiss H."/>
            <person name="Brettin T."/>
            <person name="Detter J.C."/>
            <person name="Han C."/>
            <person name="Kuske C.R."/>
            <person name="Schmutz J."/>
            <person name="Larimer F."/>
            <person name="Land M."/>
            <person name="Hauser L."/>
            <person name="Kyrpides N."/>
            <person name="Mikhailova N."/>
            <person name="Ingram L."/>
            <person name="Richardson P."/>
        </authorList>
    </citation>
    <scope>NUCLEOTIDE SEQUENCE [LARGE SCALE GENOMIC DNA]</scope>
    <source>
        <strain>ATCC 8739 / DSM 1576 / NBRC 3972 / NCIMB 8545 / WDCM 00012 / Crooks</strain>
    </source>
</reference>
<gene>
    <name evidence="1" type="primary">secB</name>
    <name type="ordered locus">EcolC_0099</name>
</gene>
<sequence length="155" mass="17291">MSEQNNTEMTFQIQRIYTKDISFEAPNAPHVFQKDWQPEVKLDLDTASTQLADDVYEVVLRVTVTASLGEETAFLCEVQQGGIFSIAGIEGTQMAHCLGAYCPNILFPYARECITSMVSRGTFPQLNLAPVNFDALFMNYLQQQAGEGTEEHQDA</sequence>
<proteinExistence type="inferred from homology"/>
<evidence type="ECO:0000255" key="1">
    <source>
        <dbReference type="HAMAP-Rule" id="MF_00821"/>
    </source>
</evidence>